<comment type="function">
    <text evidence="1">Catalyzes a transaldol reaction between 6-deoxy-5-ketofructose 1-phosphate (DKFP) and L-aspartate semialdehyde (ASA) with an elimination of hydroxypyruvaldehyde phosphate to yield 2-amino-3,7-dideoxy-D-threo-hept-6-ulosonate (ADH). Plays a key role in an alternative pathway of the biosynthesis of 3-dehydroquinate (DHQ), which is involved in the canonical pathway for the biosynthesis of aromatic amino acids.</text>
</comment>
<comment type="catalytic activity">
    <reaction evidence="1">
        <text>1-deoxy-D-threo-hexo-2,5-diulose 6-phosphate + L-aspartate 4-semialdehyde = 2,3-dioxopropyl phosphate + 2-amino-2,3,7-trideoxy-D-lyxo-hept-6-ulosonate</text>
        <dbReference type="Rhea" id="RHEA:25952"/>
        <dbReference type="ChEBI" id="CHEBI:58859"/>
        <dbReference type="ChEBI" id="CHEBI:58860"/>
        <dbReference type="ChEBI" id="CHEBI:58861"/>
        <dbReference type="ChEBI" id="CHEBI:537519"/>
        <dbReference type="EC" id="2.2.1.10"/>
    </reaction>
</comment>
<comment type="subunit">
    <text evidence="1">Homodecamer.</text>
</comment>
<comment type="similarity">
    <text evidence="1">Belongs to the DeoC/FbaB aldolase family. ADHS subfamily.</text>
</comment>
<gene>
    <name evidence="1" type="primary">aroA'</name>
    <name type="ordered locus">VNG_0309C</name>
</gene>
<dbReference type="EC" id="2.2.1.10" evidence="1"/>
<dbReference type="EMBL" id="AE004437">
    <property type="protein sequence ID" value="AAG18889.1"/>
    <property type="molecule type" value="Genomic_DNA"/>
</dbReference>
<dbReference type="PIR" id="E84190">
    <property type="entry name" value="E84190"/>
</dbReference>
<dbReference type="RefSeq" id="WP_010902183.1">
    <property type="nucleotide sequence ID" value="NC_002607.1"/>
</dbReference>
<dbReference type="SMR" id="Q9HSB8"/>
<dbReference type="FunCoup" id="Q9HSB8">
    <property type="interactions" value="70"/>
</dbReference>
<dbReference type="STRING" id="64091.VNG_0309C"/>
<dbReference type="PaxDb" id="64091-VNG_0309C"/>
<dbReference type="KEGG" id="hal:VNG_0309C"/>
<dbReference type="PATRIC" id="fig|64091.14.peg.228"/>
<dbReference type="HOGENOM" id="CLU_057069_2_0_2"/>
<dbReference type="InParanoid" id="Q9HSB8"/>
<dbReference type="OrthoDB" id="50091at2157"/>
<dbReference type="PhylomeDB" id="Q9HSB8"/>
<dbReference type="Proteomes" id="UP000000554">
    <property type="component" value="Chromosome"/>
</dbReference>
<dbReference type="GO" id="GO:0016747">
    <property type="term" value="F:acyltransferase activity, transferring groups other than amino-acyl groups"/>
    <property type="evidence" value="ECO:0000318"/>
    <property type="project" value="GO_Central"/>
</dbReference>
<dbReference type="GO" id="GO:0004332">
    <property type="term" value="F:fructose-bisphosphate aldolase activity"/>
    <property type="evidence" value="ECO:0007669"/>
    <property type="project" value="InterPro"/>
</dbReference>
<dbReference type="GO" id="GO:0016836">
    <property type="term" value="F:hydro-lyase activity"/>
    <property type="evidence" value="ECO:0007669"/>
    <property type="project" value="InterPro"/>
</dbReference>
<dbReference type="GO" id="GO:0016744">
    <property type="term" value="F:transketolase or transaldolase activity"/>
    <property type="evidence" value="ECO:0007669"/>
    <property type="project" value="UniProtKB-UniRule"/>
</dbReference>
<dbReference type="GO" id="GO:0008652">
    <property type="term" value="P:amino acid biosynthetic process"/>
    <property type="evidence" value="ECO:0007669"/>
    <property type="project" value="UniProtKB-KW"/>
</dbReference>
<dbReference type="GO" id="GO:0009073">
    <property type="term" value="P:aromatic amino acid family biosynthetic process"/>
    <property type="evidence" value="ECO:0007669"/>
    <property type="project" value="UniProtKB-UniRule"/>
</dbReference>
<dbReference type="CDD" id="cd00958">
    <property type="entry name" value="DhnA"/>
    <property type="match status" value="1"/>
</dbReference>
<dbReference type="Gene3D" id="3.20.20.70">
    <property type="entry name" value="Aldolase class I"/>
    <property type="match status" value="1"/>
</dbReference>
<dbReference type="HAMAP" id="MF_00960">
    <property type="entry name" value="ADH_synthase"/>
    <property type="match status" value="1"/>
</dbReference>
<dbReference type="InterPro" id="IPR010210">
    <property type="entry name" value="ADH_synthase"/>
</dbReference>
<dbReference type="InterPro" id="IPR013785">
    <property type="entry name" value="Aldolase_TIM"/>
</dbReference>
<dbReference type="InterPro" id="IPR002915">
    <property type="entry name" value="DeoC/FbaB/LacD_aldolase"/>
</dbReference>
<dbReference type="InterPro" id="IPR050456">
    <property type="entry name" value="DeoC/FbaB_aldolase"/>
</dbReference>
<dbReference type="InterPro" id="IPR041720">
    <property type="entry name" value="FbaB-like"/>
</dbReference>
<dbReference type="NCBIfam" id="TIGR01949">
    <property type="entry name" value="ADH_synth"/>
    <property type="match status" value="1"/>
</dbReference>
<dbReference type="NCBIfam" id="NF005556">
    <property type="entry name" value="PRK07226.1"/>
    <property type="match status" value="1"/>
</dbReference>
<dbReference type="PANTHER" id="PTHR47916:SF1">
    <property type="entry name" value="3-HYDROXY-5-PHOSPHONOOXYPENTANE-2,4-DIONE THIOLASE"/>
    <property type="match status" value="1"/>
</dbReference>
<dbReference type="PANTHER" id="PTHR47916">
    <property type="entry name" value="FRUCTOSE-BISPHOSPHATE ALDOLASE CLASS 1"/>
    <property type="match status" value="1"/>
</dbReference>
<dbReference type="Pfam" id="PF01791">
    <property type="entry name" value="DeoC"/>
    <property type="match status" value="1"/>
</dbReference>
<dbReference type="PIRSF" id="PIRSF038992">
    <property type="entry name" value="Aldolase_Ia"/>
    <property type="match status" value="1"/>
</dbReference>
<dbReference type="SMART" id="SM01133">
    <property type="entry name" value="DeoC"/>
    <property type="match status" value="1"/>
</dbReference>
<dbReference type="SUPFAM" id="SSF51569">
    <property type="entry name" value="Aldolase"/>
    <property type="match status" value="1"/>
</dbReference>
<keyword id="KW-0028">Amino-acid biosynthesis</keyword>
<keyword id="KW-0057">Aromatic amino acid biosynthesis</keyword>
<keyword id="KW-1185">Reference proteome</keyword>
<keyword id="KW-0704">Schiff base</keyword>
<keyword id="KW-0808">Transferase</keyword>
<proteinExistence type="inferred from homology"/>
<reference key="1">
    <citation type="journal article" date="2000" name="Proc. Natl. Acad. Sci. U.S.A.">
        <title>Genome sequence of Halobacterium species NRC-1.</title>
        <authorList>
            <person name="Ng W.V."/>
            <person name="Kennedy S.P."/>
            <person name="Mahairas G.G."/>
            <person name="Berquist B."/>
            <person name="Pan M."/>
            <person name="Shukla H.D."/>
            <person name="Lasky S.R."/>
            <person name="Baliga N.S."/>
            <person name="Thorsson V."/>
            <person name="Sbrogna J."/>
            <person name="Swartzell S."/>
            <person name="Weir D."/>
            <person name="Hall J."/>
            <person name="Dahl T.A."/>
            <person name="Welti R."/>
            <person name="Goo Y.A."/>
            <person name="Leithauser B."/>
            <person name="Keller K."/>
            <person name="Cruz R."/>
            <person name="Danson M.J."/>
            <person name="Hough D.W."/>
            <person name="Maddocks D.G."/>
            <person name="Jablonski P.E."/>
            <person name="Krebs M.P."/>
            <person name="Angevine C.M."/>
            <person name="Dale H."/>
            <person name="Isenbarger T.A."/>
            <person name="Peck R.F."/>
            <person name="Pohlschroder M."/>
            <person name="Spudich J.L."/>
            <person name="Jung K.-H."/>
            <person name="Alam M."/>
            <person name="Freitas T."/>
            <person name="Hou S."/>
            <person name="Daniels C.J."/>
            <person name="Dennis P.P."/>
            <person name="Omer A.D."/>
            <person name="Ebhardt H."/>
            <person name="Lowe T.M."/>
            <person name="Liang P."/>
            <person name="Riley M."/>
            <person name="Hood L."/>
            <person name="DasSarma S."/>
        </authorList>
    </citation>
    <scope>NUCLEOTIDE SEQUENCE [LARGE SCALE GENOMIC DNA]</scope>
    <source>
        <strain>ATCC 700922 / JCM 11081 / NRC-1</strain>
    </source>
</reference>
<accession>Q9HSB8</accession>
<organism>
    <name type="scientific">Halobacterium salinarum (strain ATCC 700922 / JCM 11081 / NRC-1)</name>
    <name type="common">Halobacterium halobium</name>
    <dbReference type="NCBI Taxonomy" id="64091"/>
    <lineage>
        <taxon>Archaea</taxon>
        <taxon>Methanobacteriati</taxon>
        <taxon>Methanobacteriota</taxon>
        <taxon>Stenosarchaea group</taxon>
        <taxon>Halobacteria</taxon>
        <taxon>Halobacteriales</taxon>
        <taxon>Halobacteriaceae</taxon>
        <taxon>Halobacterium</taxon>
        <taxon>Halobacterium salinarum NRC-34001</taxon>
    </lineage>
</organism>
<protein>
    <recommendedName>
        <fullName evidence="1">2-amino-3,7-dideoxy-D-threo-hept-6-ulosonate synthase</fullName>
        <shortName evidence="1">ADH synthase</shortName>
        <shortName evidence="1">ADHS</shortName>
        <shortName evidence="1">ADTH synthase</shortName>
        <ecNumber evidence="1">2.2.1.10</ecNumber>
    </recommendedName>
</protein>
<name>ADHS_HALSA</name>
<evidence type="ECO:0000255" key="1">
    <source>
        <dbReference type="HAMAP-Rule" id="MF_00960"/>
    </source>
</evidence>
<feature type="chain" id="PRO_0000138955" description="2-amino-3,7-dideoxy-D-threo-hept-6-ulosonate synthase">
    <location>
        <begin position="1"/>
        <end position="265"/>
    </location>
</feature>
<feature type="active site" description="Proton acceptor" evidence="1">
    <location>
        <position position="25"/>
    </location>
</feature>
<feature type="active site" description="Proton donor" evidence="1">
    <location>
        <position position="144"/>
    </location>
</feature>
<feature type="active site" description="Schiff-base intermediate with substrate" evidence="1">
    <location>
        <position position="174"/>
    </location>
</feature>
<feature type="binding site" evidence="1">
    <location>
        <begin position="25"/>
        <end position="29"/>
    </location>
    <ligand>
        <name>1-deoxy-D-threo-hexo-2,5-diulose 6-phosphate</name>
        <dbReference type="ChEBI" id="CHEBI:58861"/>
    </ligand>
</feature>
<feature type="binding site" evidence="1">
    <location>
        <begin position="144"/>
        <end position="146"/>
    </location>
    <ligand>
        <name>1-deoxy-D-threo-hexo-2,5-diulose 6-phosphate</name>
        <dbReference type="ChEBI" id="CHEBI:58861"/>
    </ligand>
</feature>
<feature type="binding site" evidence="1">
    <location>
        <begin position="199"/>
        <end position="200"/>
    </location>
    <ligand>
        <name>1-deoxy-D-threo-hexo-2,5-diulose 6-phosphate</name>
        <dbReference type="ChEBI" id="CHEBI:58861"/>
    </ligand>
</feature>
<feature type="binding site" evidence="1">
    <location>
        <begin position="226"/>
        <end position="227"/>
    </location>
    <ligand>
        <name>1-deoxy-D-threo-hexo-2,5-diulose 6-phosphate</name>
        <dbReference type="ChEBI" id="CHEBI:58861"/>
    </ligand>
</feature>
<sequence length="265" mass="27102">MTDAGKTARLNRISTDDRLLTIPMDHGITLGAIDGLVDIEATIREVTANGADAVLTQPGIAPRVHPNKGDAGYIVHLNASTTLGPDQTDKRRTGTVEDAVRAGADAVSFHINVGSDHEPDQITALADVAADADRLGVPVLAMAYARGPGVDEHDAANLGHAVRLAEEVGADVIKTAYSGSTESFQRVVDATAKPVIIAGGDPAGDRETLQGIRDAMDAGAAGVSTGRTVFQHATPGAMTAAISAVVHDDADPEAALARAGLVVDA</sequence>